<evidence type="ECO:0000255" key="1">
    <source>
        <dbReference type="HAMAP-Rule" id="MF_00013"/>
    </source>
</evidence>
<evidence type="ECO:0000255" key="2">
    <source>
        <dbReference type="PROSITE-ProRule" id="PRU01067"/>
    </source>
</evidence>
<name>LIPB_NITHX</name>
<proteinExistence type="inferred from homology"/>
<dbReference type="EC" id="2.3.1.181" evidence="1"/>
<dbReference type="EMBL" id="CP000319">
    <property type="protein sequence ID" value="ABE62958.1"/>
    <property type="molecule type" value="Genomic_DNA"/>
</dbReference>
<dbReference type="RefSeq" id="WP_011510635.1">
    <property type="nucleotide sequence ID" value="NC_007964.1"/>
</dbReference>
<dbReference type="SMR" id="Q1QLD9"/>
<dbReference type="STRING" id="323097.Nham_2163"/>
<dbReference type="KEGG" id="nha:Nham_2163"/>
<dbReference type="eggNOG" id="COG0321">
    <property type="taxonomic scope" value="Bacteria"/>
</dbReference>
<dbReference type="HOGENOM" id="CLU_035168_3_0_5"/>
<dbReference type="OrthoDB" id="9787061at2"/>
<dbReference type="UniPathway" id="UPA00538">
    <property type="reaction ID" value="UER00592"/>
</dbReference>
<dbReference type="Proteomes" id="UP000001953">
    <property type="component" value="Chromosome"/>
</dbReference>
<dbReference type="GO" id="GO:0005737">
    <property type="term" value="C:cytoplasm"/>
    <property type="evidence" value="ECO:0007669"/>
    <property type="project" value="UniProtKB-SubCell"/>
</dbReference>
<dbReference type="GO" id="GO:0033819">
    <property type="term" value="F:lipoyl(octanoyl) transferase activity"/>
    <property type="evidence" value="ECO:0007669"/>
    <property type="project" value="UniProtKB-EC"/>
</dbReference>
<dbReference type="GO" id="GO:0036211">
    <property type="term" value="P:protein modification process"/>
    <property type="evidence" value="ECO:0007669"/>
    <property type="project" value="InterPro"/>
</dbReference>
<dbReference type="CDD" id="cd16444">
    <property type="entry name" value="LipB"/>
    <property type="match status" value="1"/>
</dbReference>
<dbReference type="FunFam" id="3.30.930.10:FF:000159">
    <property type="entry name" value="Octanoyltransferase"/>
    <property type="match status" value="1"/>
</dbReference>
<dbReference type="Gene3D" id="3.30.930.10">
    <property type="entry name" value="Bira Bifunctional Protein, Domain 2"/>
    <property type="match status" value="1"/>
</dbReference>
<dbReference type="HAMAP" id="MF_00013">
    <property type="entry name" value="LipB"/>
    <property type="match status" value="1"/>
</dbReference>
<dbReference type="InterPro" id="IPR045864">
    <property type="entry name" value="aa-tRNA-synth_II/BPL/LPL"/>
</dbReference>
<dbReference type="InterPro" id="IPR004143">
    <property type="entry name" value="BPL_LPL_catalytic"/>
</dbReference>
<dbReference type="InterPro" id="IPR000544">
    <property type="entry name" value="Octanoyltransferase"/>
</dbReference>
<dbReference type="InterPro" id="IPR020605">
    <property type="entry name" value="Octanoyltransferase_CS"/>
</dbReference>
<dbReference type="NCBIfam" id="TIGR00214">
    <property type="entry name" value="lipB"/>
    <property type="match status" value="1"/>
</dbReference>
<dbReference type="NCBIfam" id="NF010921">
    <property type="entry name" value="PRK14341.1"/>
    <property type="match status" value="1"/>
</dbReference>
<dbReference type="NCBIfam" id="NF010925">
    <property type="entry name" value="PRK14345.1"/>
    <property type="match status" value="1"/>
</dbReference>
<dbReference type="PANTHER" id="PTHR10993:SF7">
    <property type="entry name" value="LIPOYLTRANSFERASE 2, MITOCHONDRIAL-RELATED"/>
    <property type="match status" value="1"/>
</dbReference>
<dbReference type="PANTHER" id="PTHR10993">
    <property type="entry name" value="OCTANOYLTRANSFERASE"/>
    <property type="match status" value="1"/>
</dbReference>
<dbReference type="Pfam" id="PF21948">
    <property type="entry name" value="LplA-B_cat"/>
    <property type="match status" value="1"/>
</dbReference>
<dbReference type="PIRSF" id="PIRSF016262">
    <property type="entry name" value="LPLase"/>
    <property type="match status" value="1"/>
</dbReference>
<dbReference type="SUPFAM" id="SSF55681">
    <property type="entry name" value="Class II aaRS and biotin synthetases"/>
    <property type="match status" value="1"/>
</dbReference>
<dbReference type="PROSITE" id="PS51733">
    <property type="entry name" value="BPL_LPL_CATALYTIC"/>
    <property type="match status" value="1"/>
</dbReference>
<dbReference type="PROSITE" id="PS01313">
    <property type="entry name" value="LIPB"/>
    <property type="match status" value="1"/>
</dbReference>
<feature type="chain" id="PRO_1000001112" description="Octanoyltransferase">
    <location>
        <begin position="1"/>
        <end position="241"/>
    </location>
</feature>
<feature type="domain" description="BPL/LPL catalytic" evidence="2">
    <location>
        <begin position="49"/>
        <end position="233"/>
    </location>
</feature>
<feature type="active site" description="Acyl-thioester intermediate" evidence="1">
    <location>
        <position position="193"/>
    </location>
</feature>
<feature type="binding site" evidence="1">
    <location>
        <begin position="87"/>
        <end position="94"/>
    </location>
    <ligand>
        <name>substrate</name>
    </ligand>
</feature>
<feature type="binding site" evidence="1">
    <location>
        <begin position="162"/>
        <end position="164"/>
    </location>
    <ligand>
        <name>substrate</name>
    </ligand>
</feature>
<feature type="binding site" evidence="1">
    <location>
        <begin position="175"/>
        <end position="177"/>
    </location>
    <ligand>
        <name>substrate</name>
    </ligand>
</feature>
<feature type="site" description="Lowers pKa of active site Cys" evidence="1">
    <location>
        <position position="159"/>
    </location>
</feature>
<organism>
    <name type="scientific">Nitrobacter hamburgensis (strain DSM 10229 / NCIMB 13809 / X14)</name>
    <dbReference type="NCBI Taxonomy" id="323097"/>
    <lineage>
        <taxon>Bacteria</taxon>
        <taxon>Pseudomonadati</taxon>
        <taxon>Pseudomonadota</taxon>
        <taxon>Alphaproteobacteria</taxon>
        <taxon>Hyphomicrobiales</taxon>
        <taxon>Nitrobacteraceae</taxon>
        <taxon>Nitrobacter</taxon>
    </lineage>
</organism>
<comment type="function">
    <text evidence="1">Catalyzes the transfer of endogenously produced octanoic acid from octanoyl-acyl-carrier-protein onto the lipoyl domains of lipoate-dependent enzymes. Lipoyl-ACP can also act as a substrate although octanoyl-ACP is likely to be the physiological substrate.</text>
</comment>
<comment type="catalytic activity">
    <reaction evidence="1">
        <text>octanoyl-[ACP] + L-lysyl-[protein] = N(6)-octanoyl-L-lysyl-[protein] + holo-[ACP] + H(+)</text>
        <dbReference type="Rhea" id="RHEA:17665"/>
        <dbReference type="Rhea" id="RHEA-COMP:9636"/>
        <dbReference type="Rhea" id="RHEA-COMP:9685"/>
        <dbReference type="Rhea" id="RHEA-COMP:9752"/>
        <dbReference type="Rhea" id="RHEA-COMP:9928"/>
        <dbReference type="ChEBI" id="CHEBI:15378"/>
        <dbReference type="ChEBI" id="CHEBI:29969"/>
        <dbReference type="ChEBI" id="CHEBI:64479"/>
        <dbReference type="ChEBI" id="CHEBI:78463"/>
        <dbReference type="ChEBI" id="CHEBI:78809"/>
        <dbReference type="EC" id="2.3.1.181"/>
    </reaction>
</comment>
<comment type="pathway">
    <text evidence="1">Protein modification; protein lipoylation via endogenous pathway; protein N(6)-(lipoyl)lysine from octanoyl-[acyl-carrier-protein]: step 1/2.</text>
</comment>
<comment type="subcellular location">
    <subcellularLocation>
        <location evidence="1">Cytoplasm</location>
    </subcellularLocation>
</comment>
<comment type="miscellaneous">
    <text evidence="1">In the reaction, the free carboxyl group of octanoic acid is attached via an amide linkage to the epsilon-amino group of a specific lysine residue of lipoyl domains of lipoate-dependent enzymes.</text>
</comment>
<comment type="similarity">
    <text evidence="1">Belongs to the LipB family.</text>
</comment>
<sequence length="241" mass="26599">MVNNRQTLDLKLFPASPGELVDWQLSDTPVPYPEAVAAMEARAAAIASGEASELVWLLEHPPLYTSGTSGRETDLLQARFPLFSTGRGGQVTYHGPGQRVAYVMLDLKRRRPDVRAFVAGLEEWIIRTLDTFDIKGERREDRVGVWVARPDKGPGHEDKIAAIGVRLRRWVSFHGISLNVDPDLSHFDAIVPCGITDARYGVTSLADLGLRVRLSDVDAALRRAFGEVFGPSELRLPETTA</sequence>
<protein>
    <recommendedName>
        <fullName evidence="1">Octanoyltransferase</fullName>
        <ecNumber evidence="1">2.3.1.181</ecNumber>
    </recommendedName>
    <alternativeName>
        <fullName evidence="1">Lipoate-protein ligase B</fullName>
    </alternativeName>
    <alternativeName>
        <fullName evidence="1">Lipoyl/octanoyl transferase</fullName>
    </alternativeName>
    <alternativeName>
        <fullName evidence="1">Octanoyl-[acyl-carrier-protein]-protein N-octanoyltransferase</fullName>
    </alternativeName>
</protein>
<reference key="1">
    <citation type="submission" date="2006-03" db="EMBL/GenBank/DDBJ databases">
        <title>Complete sequence of chromosome of Nitrobacter hamburgensis X14.</title>
        <authorList>
            <consortium name="US DOE Joint Genome Institute"/>
            <person name="Copeland A."/>
            <person name="Lucas S."/>
            <person name="Lapidus A."/>
            <person name="Barry K."/>
            <person name="Detter J.C."/>
            <person name="Glavina del Rio T."/>
            <person name="Hammon N."/>
            <person name="Israni S."/>
            <person name="Dalin E."/>
            <person name="Tice H."/>
            <person name="Pitluck S."/>
            <person name="Chain P."/>
            <person name="Malfatti S."/>
            <person name="Shin M."/>
            <person name="Vergez L."/>
            <person name="Schmutz J."/>
            <person name="Larimer F."/>
            <person name="Land M."/>
            <person name="Hauser L."/>
            <person name="Kyrpides N."/>
            <person name="Ivanova N."/>
            <person name="Ward B."/>
            <person name="Arp D."/>
            <person name="Klotz M."/>
            <person name="Stein L."/>
            <person name="O'Mullan G."/>
            <person name="Starkenburg S."/>
            <person name="Sayavedra L."/>
            <person name="Poret-Peterson A.T."/>
            <person name="Gentry M.E."/>
            <person name="Bruce D."/>
            <person name="Richardson P."/>
        </authorList>
    </citation>
    <scope>NUCLEOTIDE SEQUENCE [LARGE SCALE GENOMIC DNA]</scope>
    <source>
        <strain>DSM 10229 / NCIMB 13809 / X14</strain>
    </source>
</reference>
<accession>Q1QLD9</accession>
<gene>
    <name evidence="1" type="primary">lipB</name>
    <name type="ordered locus">Nham_2163</name>
</gene>
<keyword id="KW-0012">Acyltransferase</keyword>
<keyword id="KW-0963">Cytoplasm</keyword>
<keyword id="KW-1185">Reference proteome</keyword>
<keyword id="KW-0808">Transferase</keyword>